<organism>
    <name type="scientific">Shigella sonnei (strain Ss046)</name>
    <dbReference type="NCBI Taxonomy" id="300269"/>
    <lineage>
        <taxon>Bacteria</taxon>
        <taxon>Pseudomonadati</taxon>
        <taxon>Pseudomonadota</taxon>
        <taxon>Gammaproteobacteria</taxon>
        <taxon>Enterobacterales</taxon>
        <taxon>Enterobacteriaceae</taxon>
        <taxon>Shigella</taxon>
    </lineage>
</organism>
<accession>Q3Z0G4</accession>
<name>HIS8_SHISS</name>
<sequence>MSTVTITDLARENVRNLTPYQSARRLGGNGDVWLNANEYPTAVEFQLTQQTLNRYPECQPKAVIENYAQYAGVKPEQVLVSRGADEGIELLIRAFCEPGKDAILYCPPTYGMYSVSAETIGVECRTVPTQDNWQLDLQGISDKLDGVKVVYVCSPNNPTGQLINPQDFRTLLELTRGKAIVVADEAYIEFCPQASLAGWLTEYPHLAILRTLSKAFALAGLRCGFTLANEEVINLLMKVIAPYPLSTPVADIAAQALSPQGIVAMRERVTQIIAEREYLIAALKEIPCVEQVFDSATNYILARFKASSAVFKSLWDQGIILRDQNKQPSLSGCLRITVGTREESQRVIDALRAEQV</sequence>
<reference key="1">
    <citation type="journal article" date="2005" name="Nucleic Acids Res.">
        <title>Genome dynamics and diversity of Shigella species, the etiologic agents of bacillary dysentery.</title>
        <authorList>
            <person name="Yang F."/>
            <person name="Yang J."/>
            <person name="Zhang X."/>
            <person name="Chen L."/>
            <person name="Jiang Y."/>
            <person name="Yan Y."/>
            <person name="Tang X."/>
            <person name="Wang J."/>
            <person name="Xiong Z."/>
            <person name="Dong J."/>
            <person name="Xue Y."/>
            <person name="Zhu Y."/>
            <person name="Xu X."/>
            <person name="Sun L."/>
            <person name="Chen S."/>
            <person name="Nie H."/>
            <person name="Peng J."/>
            <person name="Xu J."/>
            <person name="Wang Y."/>
            <person name="Yuan Z."/>
            <person name="Wen Y."/>
            <person name="Yao Z."/>
            <person name="Shen Y."/>
            <person name="Qiang B."/>
            <person name="Hou Y."/>
            <person name="Yu J."/>
            <person name="Jin Q."/>
        </authorList>
    </citation>
    <scope>NUCLEOTIDE SEQUENCE [LARGE SCALE GENOMIC DNA]</scope>
    <source>
        <strain>Ss046</strain>
    </source>
</reference>
<comment type="catalytic activity">
    <reaction evidence="1">
        <text>L-histidinol phosphate + 2-oxoglutarate = 3-(imidazol-4-yl)-2-oxopropyl phosphate + L-glutamate</text>
        <dbReference type="Rhea" id="RHEA:23744"/>
        <dbReference type="ChEBI" id="CHEBI:16810"/>
        <dbReference type="ChEBI" id="CHEBI:29985"/>
        <dbReference type="ChEBI" id="CHEBI:57766"/>
        <dbReference type="ChEBI" id="CHEBI:57980"/>
        <dbReference type="EC" id="2.6.1.9"/>
    </reaction>
</comment>
<comment type="cofactor">
    <cofactor evidence="1">
        <name>pyridoxal 5'-phosphate</name>
        <dbReference type="ChEBI" id="CHEBI:597326"/>
    </cofactor>
</comment>
<comment type="pathway">
    <text evidence="1">Amino-acid biosynthesis; L-histidine biosynthesis; L-histidine from 5-phospho-alpha-D-ribose 1-diphosphate: step 7/9.</text>
</comment>
<comment type="subunit">
    <text evidence="1">Homodimer.</text>
</comment>
<comment type="similarity">
    <text evidence="1">Belongs to the class-II pyridoxal-phosphate-dependent aminotransferase family. Histidinol-phosphate aminotransferase subfamily.</text>
</comment>
<protein>
    <recommendedName>
        <fullName evidence="1">Histidinol-phosphate aminotransferase</fullName>
        <ecNumber evidence="1">2.6.1.9</ecNumber>
    </recommendedName>
    <alternativeName>
        <fullName evidence="1">Imidazole acetol-phosphate transaminase</fullName>
    </alternativeName>
</protein>
<dbReference type="EC" id="2.6.1.9" evidence="1"/>
<dbReference type="EMBL" id="CP000038">
    <property type="protein sequence ID" value="AAZ88748.1"/>
    <property type="molecule type" value="Genomic_DNA"/>
</dbReference>
<dbReference type="RefSeq" id="WP_000108977.1">
    <property type="nucleotide sequence ID" value="NC_007384.1"/>
</dbReference>
<dbReference type="SMR" id="Q3Z0G4"/>
<dbReference type="GeneID" id="93775152"/>
<dbReference type="KEGG" id="ssn:SSON_2092"/>
<dbReference type="HOGENOM" id="CLU_017584_3_1_6"/>
<dbReference type="UniPathway" id="UPA00031">
    <property type="reaction ID" value="UER00012"/>
</dbReference>
<dbReference type="Proteomes" id="UP000002529">
    <property type="component" value="Chromosome"/>
</dbReference>
<dbReference type="GO" id="GO:0004400">
    <property type="term" value="F:histidinol-phosphate transaminase activity"/>
    <property type="evidence" value="ECO:0007669"/>
    <property type="project" value="UniProtKB-UniRule"/>
</dbReference>
<dbReference type="GO" id="GO:0030170">
    <property type="term" value="F:pyridoxal phosphate binding"/>
    <property type="evidence" value="ECO:0007669"/>
    <property type="project" value="InterPro"/>
</dbReference>
<dbReference type="GO" id="GO:0000105">
    <property type="term" value="P:L-histidine biosynthetic process"/>
    <property type="evidence" value="ECO:0007669"/>
    <property type="project" value="UniProtKB-UniRule"/>
</dbReference>
<dbReference type="CDD" id="cd00609">
    <property type="entry name" value="AAT_like"/>
    <property type="match status" value="1"/>
</dbReference>
<dbReference type="FunFam" id="3.40.640.10:FF:000032">
    <property type="entry name" value="Histidinol-phosphate aminotransferase"/>
    <property type="match status" value="1"/>
</dbReference>
<dbReference type="FunFam" id="3.90.1150.10:FF:000042">
    <property type="entry name" value="Histidinol-phosphate aminotransferase"/>
    <property type="match status" value="1"/>
</dbReference>
<dbReference type="Gene3D" id="3.90.1150.10">
    <property type="entry name" value="Aspartate Aminotransferase, domain 1"/>
    <property type="match status" value="1"/>
</dbReference>
<dbReference type="Gene3D" id="3.40.640.10">
    <property type="entry name" value="Type I PLP-dependent aspartate aminotransferase-like (Major domain)"/>
    <property type="match status" value="1"/>
</dbReference>
<dbReference type="HAMAP" id="MF_01023">
    <property type="entry name" value="HisC_aminotrans_2"/>
    <property type="match status" value="1"/>
</dbReference>
<dbReference type="InterPro" id="IPR001917">
    <property type="entry name" value="Aminotrans_II_pyridoxalP_BS"/>
</dbReference>
<dbReference type="InterPro" id="IPR004839">
    <property type="entry name" value="Aminotransferase_I/II_large"/>
</dbReference>
<dbReference type="InterPro" id="IPR005861">
    <property type="entry name" value="HisP_aminotrans"/>
</dbReference>
<dbReference type="InterPro" id="IPR015424">
    <property type="entry name" value="PyrdxlP-dep_Trfase"/>
</dbReference>
<dbReference type="InterPro" id="IPR015421">
    <property type="entry name" value="PyrdxlP-dep_Trfase_major"/>
</dbReference>
<dbReference type="InterPro" id="IPR015422">
    <property type="entry name" value="PyrdxlP-dep_Trfase_small"/>
</dbReference>
<dbReference type="NCBIfam" id="TIGR01141">
    <property type="entry name" value="hisC"/>
    <property type="match status" value="1"/>
</dbReference>
<dbReference type="PANTHER" id="PTHR42885:SF2">
    <property type="entry name" value="HISTIDINOL-PHOSPHATE AMINOTRANSFERASE"/>
    <property type="match status" value="1"/>
</dbReference>
<dbReference type="PANTHER" id="PTHR42885">
    <property type="entry name" value="HISTIDINOL-PHOSPHATE AMINOTRANSFERASE-RELATED"/>
    <property type="match status" value="1"/>
</dbReference>
<dbReference type="Pfam" id="PF00155">
    <property type="entry name" value="Aminotran_1_2"/>
    <property type="match status" value="1"/>
</dbReference>
<dbReference type="SUPFAM" id="SSF53383">
    <property type="entry name" value="PLP-dependent transferases"/>
    <property type="match status" value="1"/>
</dbReference>
<dbReference type="PROSITE" id="PS00599">
    <property type="entry name" value="AA_TRANSFER_CLASS_2"/>
    <property type="match status" value="1"/>
</dbReference>
<keyword id="KW-0028">Amino-acid biosynthesis</keyword>
<keyword id="KW-0032">Aminotransferase</keyword>
<keyword id="KW-0368">Histidine biosynthesis</keyword>
<keyword id="KW-0663">Pyridoxal phosphate</keyword>
<keyword id="KW-1185">Reference proteome</keyword>
<keyword id="KW-0808">Transferase</keyword>
<gene>
    <name evidence="1" type="primary">hisC</name>
    <name type="ordered locus">SSON_2092</name>
</gene>
<proteinExistence type="inferred from homology"/>
<feature type="chain" id="PRO_0000153449" description="Histidinol-phosphate aminotransferase">
    <location>
        <begin position="1"/>
        <end position="356"/>
    </location>
</feature>
<feature type="modified residue" description="N6-(pyridoxal phosphate)lysine" evidence="1">
    <location>
        <position position="214"/>
    </location>
</feature>
<evidence type="ECO:0000255" key="1">
    <source>
        <dbReference type="HAMAP-Rule" id="MF_01023"/>
    </source>
</evidence>